<name>C71BE_ARATH</name>
<organism>
    <name type="scientific">Arabidopsis thaliana</name>
    <name type="common">Mouse-ear cress</name>
    <dbReference type="NCBI Taxonomy" id="3702"/>
    <lineage>
        <taxon>Eukaryota</taxon>
        <taxon>Viridiplantae</taxon>
        <taxon>Streptophyta</taxon>
        <taxon>Embryophyta</taxon>
        <taxon>Tracheophyta</taxon>
        <taxon>Spermatophyta</taxon>
        <taxon>Magnoliopsida</taxon>
        <taxon>eudicotyledons</taxon>
        <taxon>Gunneridae</taxon>
        <taxon>Pentapetalae</taxon>
        <taxon>rosids</taxon>
        <taxon>malvids</taxon>
        <taxon>Brassicales</taxon>
        <taxon>Brassicaceae</taxon>
        <taxon>Camelineae</taxon>
        <taxon>Arabidopsis</taxon>
    </lineage>
</organism>
<keyword id="KW-0349">Heme</keyword>
<keyword id="KW-0408">Iron</keyword>
<keyword id="KW-0472">Membrane</keyword>
<keyword id="KW-0479">Metal-binding</keyword>
<keyword id="KW-0503">Monooxygenase</keyword>
<keyword id="KW-0560">Oxidoreductase</keyword>
<keyword id="KW-1185">Reference proteome</keyword>
<keyword id="KW-0812">Transmembrane</keyword>
<keyword id="KW-1133">Transmembrane helix</keyword>
<comment type="cofactor">
    <cofactor evidence="1">
        <name>heme</name>
        <dbReference type="ChEBI" id="CHEBI:30413"/>
    </cofactor>
</comment>
<comment type="subcellular location">
    <subcellularLocation>
        <location evidence="3">Membrane</location>
        <topology evidence="3">Single-pass membrane protein</topology>
    </subcellularLocation>
</comment>
<comment type="similarity">
    <text evidence="3">Belongs to the cytochrome P450 family.</text>
</comment>
<comment type="sequence caution" evidence="3">
    <conflict type="erroneous translation">
        <sequence resource="EMBL-CDS" id="AAL38330"/>
    </conflict>
    <text>Wrong choice of frame.</text>
</comment>
<comment type="sequence caution" evidence="3">
    <conflict type="erroneous translation">
        <sequence resource="EMBL-CDS" id="AAM47919"/>
    </conflict>
    <text>Wrong choice of frame.</text>
</comment>
<evidence type="ECO:0000250" key="1"/>
<evidence type="ECO:0000255" key="2"/>
<evidence type="ECO:0000305" key="3"/>
<accession>P58051</accession>
<accession>Q8VZ92</accession>
<protein>
    <recommendedName>
        <fullName>Cytochrome P450 71B14</fullName>
        <ecNumber>1.14.-.-</ecNumber>
    </recommendedName>
</protein>
<proteinExistence type="evidence at transcript level"/>
<sequence length="496" mass="56900">MIWWFIVGASFFFAFILIAKDTRTTKKNLPPGPPRLPIIGNLHQLGSKPQRSLFKLSEKYGSLMSLKFGNVSAVVASTPETVKDVLKTFDAECCSRPYMTYPARVTYNFNDLAFSPYSKYWREVRKMTVIELYTAKRVKSFQNVRQEEVASFVDFIKQHASLEKTVNMKQKLVKLSGSVICKVGFGISLEWSKLANTYEEVIQGTMEVVGRFAAADYFPIIGRIIDRITGLHSKCEKVFKEMDSFFDQSIKHHLEDTNIKDDIIGLLLKMEKGETGLGEFQLTRNHTKGILLNVLIAGVDTSGHTVTWVMTHLIKNPRVMKKAQAEVREVIKNKDDITEEDIERLEYLKMVIKETLRINPLVPLLIPREASKYIKIGGYDIPKKTWIYVNIWAVQRNPNVWKDPEVFIPERFMHSEIDYKGVDFELLPFGSGRRMCPGMGLGMALVHLTLINLLYRFDWKLPEGMNIEDVDLEESYGLVCPKKVPLQLIPVLTQWT</sequence>
<reference key="1">
    <citation type="journal article" date="2000" name="Nature">
        <title>Sequence and analysis of chromosome 5 of the plant Arabidopsis thaliana.</title>
        <authorList>
            <person name="Tabata S."/>
            <person name="Kaneko T."/>
            <person name="Nakamura Y."/>
            <person name="Kotani H."/>
            <person name="Kato T."/>
            <person name="Asamizu E."/>
            <person name="Miyajima N."/>
            <person name="Sasamoto S."/>
            <person name="Kimura T."/>
            <person name="Hosouchi T."/>
            <person name="Kawashima K."/>
            <person name="Kohara M."/>
            <person name="Matsumoto M."/>
            <person name="Matsuno A."/>
            <person name="Muraki A."/>
            <person name="Nakayama S."/>
            <person name="Nakazaki N."/>
            <person name="Naruo K."/>
            <person name="Okumura S."/>
            <person name="Shinpo S."/>
            <person name="Takeuchi C."/>
            <person name="Wada T."/>
            <person name="Watanabe A."/>
            <person name="Yamada M."/>
            <person name="Yasuda M."/>
            <person name="Sato S."/>
            <person name="de la Bastide M."/>
            <person name="Huang E."/>
            <person name="Spiegel L."/>
            <person name="Gnoj L."/>
            <person name="O'Shaughnessy A."/>
            <person name="Preston R."/>
            <person name="Habermann K."/>
            <person name="Murray J."/>
            <person name="Johnson D."/>
            <person name="Rohlfing T."/>
            <person name="Nelson J."/>
            <person name="Stoneking T."/>
            <person name="Pepin K."/>
            <person name="Spieth J."/>
            <person name="Sekhon M."/>
            <person name="Armstrong J."/>
            <person name="Becker M."/>
            <person name="Belter E."/>
            <person name="Cordum H."/>
            <person name="Cordes M."/>
            <person name="Courtney L."/>
            <person name="Courtney W."/>
            <person name="Dante M."/>
            <person name="Du H."/>
            <person name="Edwards J."/>
            <person name="Fryman J."/>
            <person name="Haakensen B."/>
            <person name="Lamar E."/>
            <person name="Latreille P."/>
            <person name="Leonard S."/>
            <person name="Meyer R."/>
            <person name="Mulvaney E."/>
            <person name="Ozersky P."/>
            <person name="Riley A."/>
            <person name="Strowmatt C."/>
            <person name="Wagner-McPherson C."/>
            <person name="Wollam A."/>
            <person name="Yoakum M."/>
            <person name="Bell M."/>
            <person name="Dedhia N."/>
            <person name="Parnell L."/>
            <person name="Shah R."/>
            <person name="Rodriguez M."/>
            <person name="Hoon See L."/>
            <person name="Vil D."/>
            <person name="Baker J."/>
            <person name="Kirchoff K."/>
            <person name="Toth K."/>
            <person name="King L."/>
            <person name="Bahret A."/>
            <person name="Miller B."/>
            <person name="Marra M.A."/>
            <person name="Martienssen R."/>
            <person name="McCombie W.R."/>
            <person name="Wilson R.K."/>
            <person name="Murphy G."/>
            <person name="Bancroft I."/>
            <person name="Volckaert G."/>
            <person name="Wambutt R."/>
            <person name="Duesterhoeft A."/>
            <person name="Stiekema W."/>
            <person name="Pohl T."/>
            <person name="Entian K.-D."/>
            <person name="Terryn N."/>
            <person name="Hartley N."/>
            <person name="Bent E."/>
            <person name="Johnson S."/>
            <person name="Langham S.-A."/>
            <person name="McCullagh B."/>
            <person name="Robben J."/>
            <person name="Grymonprez B."/>
            <person name="Zimmermann W."/>
            <person name="Ramsperger U."/>
            <person name="Wedler H."/>
            <person name="Balke K."/>
            <person name="Wedler E."/>
            <person name="Peters S."/>
            <person name="van Staveren M."/>
            <person name="Dirkse W."/>
            <person name="Mooijman P."/>
            <person name="Klein Lankhorst R."/>
            <person name="Weitzenegger T."/>
            <person name="Bothe G."/>
            <person name="Rose M."/>
            <person name="Hauf J."/>
            <person name="Berneiser S."/>
            <person name="Hempel S."/>
            <person name="Feldpausch M."/>
            <person name="Lamberth S."/>
            <person name="Villarroel R."/>
            <person name="Gielen J."/>
            <person name="Ardiles W."/>
            <person name="Bents O."/>
            <person name="Lemcke K."/>
            <person name="Kolesov G."/>
            <person name="Mayer K.F.X."/>
            <person name="Rudd S."/>
            <person name="Schoof H."/>
            <person name="Schueller C."/>
            <person name="Zaccaria P."/>
            <person name="Mewes H.-W."/>
            <person name="Bevan M."/>
            <person name="Fransz P.F."/>
        </authorList>
    </citation>
    <scope>NUCLEOTIDE SEQUENCE [LARGE SCALE GENOMIC DNA]</scope>
    <source>
        <strain>cv. Columbia</strain>
    </source>
</reference>
<reference key="2">
    <citation type="journal article" date="2017" name="Plant J.">
        <title>Araport11: a complete reannotation of the Arabidopsis thaliana reference genome.</title>
        <authorList>
            <person name="Cheng C.Y."/>
            <person name="Krishnakumar V."/>
            <person name="Chan A.P."/>
            <person name="Thibaud-Nissen F."/>
            <person name="Schobel S."/>
            <person name="Town C.D."/>
        </authorList>
    </citation>
    <scope>GENOME REANNOTATION</scope>
    <source>
        <strain>cv. Columbia</strain>
    </source>
</reference>
<reference key="3">
    <citation type="journal article" date="2003" name="Science">
        <title>Empirical analysis of transcriptional activity in the Arabidopsis genome.</title>
        <authorList>
            <person name="Yamada K."/>
            <person name="Lim J."/>
            <person name="Dale J.M."/>
            <person name="Chen H."/>
            <person name="Shinn P."/>
            <person name="Palm C.J."/>
            <person name="Southwick A.M."/>
            <person name="Wu H.C."/>
            <person name="Kim C.J."/>
            <person name="Nguyen M."/>
            <person name="Pham P.K."/>
            <person name="Cheuk R.F."/>
            <person name="Karlin-Newmann G."/>
            <person name="Liu S.X."/>
            <person name="Lam B."/>
            <person name="Sakano H."/>
            <person name="Wu T."/>
            <person name="Yu G."/>
            <person name="Miranda M."/>
            <person name="Quach H.L."/>
            <person name="Tripp M."/>
            <person name="Chang C.H."/>
            <person name="Lee J.M."/>
            <person name="Toriumi M.J."/>
            <person name="Chan M.M."/>
            <person name="Tang C.C."/>
            <person name="Onodera C.S."/>
            <person name="Deng J.M."/>
            <person name="Akiyama K."/>
            <person name="Ansari Y."/>
            <person name="Arakawa T."/>
            <person name="Banh J."/>
            <person name="Banno F."/>
            <person name="Bowser L."/>
            <person name="Brooks S.Y."/>
            <person name="Carninci P."/>
            <person name="Chao Q."/>
            <person name="Choy N."/>
            <person name="Enju A."/>
            <person name="Goldsmith A.D."/>
            <person name="Gurjal M."/>
            <person name="Hansen N.F."/>
            <person name="Hayashizaki Y."/>
            <person name="Johnson-Hopson C."/>
            <person name="Hsuan V.W."/>
            <person name="Iida K."/>
            <person name="Karnes M."/>
            <person name="Khan S."/>
            <person name="Koesema E."/>
            <person name="Ishida J."/>
            <person name="Jiang P.X."/>
            <person name="Jones T."/>
            <person name="Kawai J."/>
            <person name="Kamiya A."/>
            <person name="Meyers C."/>
            <person name="Nakajima M."/>
            <person name="Narusaka M."/>
            <person name="Seki M."/>
            <person name="Sakurai T."/>
            <person name="Satou M."/>
            <person name="Tamse R."/>
            <person name="Vaysberg M."/>
            <person name="Wallender E.K."/>
            <person name="Wong C."/>
            <person name="Yamamura Y."/>
            <person name="Yuan S."/>
            <person name="Shinozaki K."/>
            <person name="Davis R.W."/>
            <person name="Theologis A."/>
            <person name="Ecker J.R."/>
        </authorList>
    </citation>
    <scope>NUCLEOTIDE SEQUENCE [LARGE SCALE MRNA] OF 1-380</scope>
    <source>
        <strain>cv. Columbia</strain>
    </source>
</reference>
<reference key="4">
    <citation type="journal article" date="2004" name="Genome Res.">
        <title>Whole genome sequence comparisons and 'full-length' cDNA sequences: a combined approach to evaluate and improve Arabidopsis genome annotation.</title>
        <authorList>
            <person name="Castelli V."/>
            <person name="Aury J.-M."/>
            <person name="Jaillon O."/>
            <person name="Wincker P."/>
            <person name="Clepet C."/>
            <person name="Menard M."/>
            <person name="Cruaud C."/>
            <person name="Quetier F."/>
            <person name="Scarpelli C."/>
            <person name="Schaechter V."/>
            <person name="Temple G."/>
            <person name="Caboche M."/>
            <person name="Weissenbach J."/>
            <person name="Salanoubat M."/>
        </authorList>
    </citation>
    <scope>NUCLEOTIDE SEQUENCE [LARGE SCALE MRNA] OF 343-496</scope>
    <source>
        <strain>cv. Columbia</strain>
    </source>
</reference>
<gene>
    <name type="primary">CYP71B14</name>
    <name type="ordered locus">At5g25180</name>
    <name type="ORF">F21J6.102</name>
</gene>
<feature type="chain" id="PRO_0000052092" description="Cytochrome P450 71B14">
    <location>
        <begin position="1"/>
        <end position="496"/>
    </location>
</feature>
<feature type="transmembrane region" description="Helical" evidence="2">
    <location>
        <begin position="1"/>
        <end position="21"/>
    </location>
</feature>
<feature type="binding site" description="axial binding residue" evidence="1">
    <location>
        <position position="436"/>
    </location>
    <ligand>
        <name>heme</name>
        <dbReference type="ChEBI" id="CHEBI:30413"/>
    </ligand>
    <ligandPart>
        <name>Fe</name>
        <dbReference type="ChEBI" id="CHEBI:18248"/>
    </ligandPart>
</feature>
<feature type="sequence conflict" description="In Ref. 4; BX832660." evidence="3" ref="4">
    <original>A</original>
    <variation>S</variation>
    <location>
        <position position="393"/>
    </location>
</feature>
<feature type="sequence conflict" description="In Ref. 4; BX832660." evidence="3" ref="4">
    <original>D</original>
    <variation>Y</variation>
    <location>
        <position position="418"/>
    </location>
</feature>
<feature type="sequence conflict" description="In Ref. 4; BX832660." evidence="3" ref="4">
    <original>C</original>
    <variation>Y</variation>
    <location>
        <position position="436"/>
    </location>
</feature>
<dbReference type="EC" id="1.14.-.-"/>
<dbReference type="EMBL" id="AC006259">
    <property type="status" value="NOT_ANNOTATED_CDS"/>
    <property type="molecule type" value="Genomic_DNA"/>
</dbReference>
<dbReference type="EMBL" id="CP002688">
    <property type="protein sequence ID" value="AED93409.1"/>
    <property type="molecule type" value="Genomic_DNA"/>
</dbReference>
<dbReference type="EMBL" id="AY065154">
    <property type="protein sequence ID" value="AAL38330.1"/>
    <property type="status" value="ALT_SEQ"/>
    <property type="molecule type" value="mRNA"/>
</dbReference>
<dbReference type="EMBL" id="AY114600">
    <property type="protein sequence ID" value="AAM47919.1"/>
    <property type="status" value="ALT_SEQ"/>
    <property type="molecule type" value="mRNA"/>
</dbReference>
<dbReference type="EMBL" id="BX832660">
    <property type="status" value="NOT_ANNOTATED_CDS"/>
    <property type="molecule type" value="mRNA"/>
</dbReference>
<dbReference type="RefSeq" id="NP_197900.1">
    <property type="nucleotide sequence ID" value="NM_122427.2"/>
</dbReference>
<dbReference type="SMR" id="P58051"/>
<dbReference type="FunCoup" id="P58051">
    <property type="interactions" value="281"/>
</dbReference>
<dbReference type="STRING" id="3702.P58051"/>
<dbReference type="PaxDb" id="3702-AT5G25180.1"/>
<dbReference type="ProteomicsDB" id="240264"/>
<dbReference type="EnsemblPlants" id="AT5G25180.1">
    <property type="protein sequence ID" value="AT5G25180.1"/>
    <property type="gene ID" value="AT5G25180"/>
</dbReference>
<dbReference type="GeneID" id="832589"/>
<dbReference type="Gramene" id="AT5G25180.1">
    <property type="protein sequence ID" value="AT5G25180.1"/>
    <property type="gene ID" value="AT5G25180"/>
</dbReference>
<dbReference type="KEGG" id="ath:AT5G25180"/>
<dbReference type="Araport" id="AT5G25180"/>
<dbReference type="TAIR" id="AT5G25180">
    <property type="gene designation" value="CYP71B14"/>
</dbReference>
<dbReference type="eggNOG" id="KOG0156">
    <property type="taxonomic scope" value="Eukaryota"/>
</dbReference>
<dbReference type="HOGENOM" id="CLU_001570_4_1_1"/>
<dbReference type="InParanoid" id="P58051"/>
<dbReference type="OMA" id="MDNGIDY"/>
<dbReference type="PhylomeDB" id="P58051"/>
<dbReference type="BioCyc" id="ARA:AT5G25180-MONOMER"/>
<dbReference type="PRO" id="PR:P58051"/>
<dbReference type="Proteomes" id="UP000006548">
    <property type="component" value="Chromosome 5"/>
</dbReference>
<dbReference type="ExpressionAtlas" id="P58051">
    <property type="expression patterns" value="baseline and differential"/>
</dbReference>
<dbReference type="GO" id="GO:0016020">
    <property type="term" value="C:membrane"/>
    <property type="evidence" value="ECO:0007669"/>
    <property type="project" value="UniProtKB-SubCell"/>
</dbReference>
<dbReference type="GO" id="GO:0020037">
    <property type="term" value="F:heme binding"/>
    <property type="evidence" value="ECO:0007669"/>
    <property type="project" value="InterPro"/>
</dbReference>
<dbReference type="GO" id="GO:0005506">
    <property type="term" value="F:iron ion binding"/>
    <property type="evidence" value="ECO:0007669"/>
    <property type="project" value="InterPro"/>
</dbReference>
<dbReference type="GO" id="GO:0004497">
    <property type="term" value="F:monooxygenase activity"/>
    <property type="evidence" value="ECO:0007669"/>
    <property type="project" value="UniProtKB-KW"/>
</dbReference>
<dbReference type="GO" id="GO:0016705">
    <property type="term" value="F:oxidoreductase activity, acting on paired donors, with incorporation or reduction of molecular oxygen"/>
    <property type="evidence" value="ECO:0007669"/>
    <property type="project" value="InterPro"/>
</dbReference>
<dbReference type="CDD" id="cd11072">
    <property type="entry name" value="CYP71-like"/>
    <property type="match status" value="1"/>
</dbReference>
<dbReference type="FunFam" id="1.10.630.10:FF:000043">
    <property type="entry name" value="Cytochrome P450 99A2"/>
    <property type="match status" value="1"/>
</dbReference>
<dbReference type="Gene3D" id="1.10.630.10">
    <property type="entry name" value="Cytochrome P450"/>
    <property type="match status" value="1"/>
</dbReference>
<dbReference type="InterPro" id="IPR001128">
    <property type="entry name" value="Cyt_P450"/>
</dbReference>
<dbReference type="InterPro" id="IPR017972">
    <property type="entry name" value="Cyt_P450_CS"/>
</dbReference>
<dbReference type="InterPro" id="IPR002401">
    <property type="entry name" value="Cyt_P450_E_grp-I"/>
</dbReference>
<dbReference type="InterPro" id="IPR036396">
    <property type="entry name" value="Cyt_P450_sf"/>
</dbReference>
<dbReference type="PANTHER" id="PTHR47955:SF19">
    <property type="entry name" value="CYTOCHROME P450 71A9-LIKE ISOFORM X1"/>
    <property type="match status" value="1"/>
</dbReference>
<dbReference type="PANTHER" id="PTHR47955">
    <property type="entry name" value="CYTOCHROME P450 FAMILY 71 PROTEIN"/>
    <property type="match status" value="1"/>
</dbReference>
<dbReference type="Pfam" id="PF00067">
    <property type="entry name" value="p450"/>
    <property type="match status" value="1"/>
</dbReference>
<dbReference type="PRINTS" id="PR00463">
    <property type="entry name" value="EP450I"/>
</dbReference>
<dbReference type="PRINTS" id="PR00385">
    <property type="entry name" value="P450"/>
</dbReference>
<dbReference type="SUPFAM" id="SSF48264">
    <property type="entry name" value="Cytochrome P450"/>
    <property type="match status" value="1"/>
</dbReference>
<dbReference type="PROSITE" id="PS00086">
    <property type="entry name" value="CYTOCHROME_P450"/>
    <property type="match status" value="1"/>
</dbReference>